<name>EP3B_HUMAN</name>
<sequence>MASSLKIWGTLLALLCILCTLLVQSKEVSWREFMKQHYLSPSREFREYKCDVLMRENEALKDKSSHMFIYISWYKIEHICTSDNWMDRFRNAYVWVQNPLKVLKCHQENSKNSYTESRSFNYIEFHCSMDGYVDSIEDLKMVEPIGN</sequence>
<feature type="signal peptide" evidence="1">
    <location>
        <begin position="1"/>
        <end position="25"/>
    </location>
</feature>
<feature type="chain" id="PRO_0000021189" description="Epididymal secretory protein E3-beta">
    <location>
        <begin position="26"/>
        <end position="147"/>
    </location>
</feature>
<feature type="sequence variant" id="VAR_038946" description="In dbSNP:rs3827906." evidence="2">
    <original>L</original>
    <variation>V</variation>
    <location>
        <position position="5"/>
    </location>
</feature>
<keyword id="KW-1267">Proteomics identification</keyword>
<keyword id="KW-1185">Reference proteome</keyword>
<keyword id="KW-0964">Secreted</keyword>
<keyword id="KW-0732">Signal</keyword>
<dbReference type="EMBL" id="X76386">
    <property type="protein sequence ID" value="CAC17141.1"/>
    <property type="molecule type" value="mRNA"/>
</dbReference>
<dbReference type="EMBL" id="AY358865">
    <property type="protein sequence ID" value="AAQ89224.1"/>
    <property type="molecule type" value="mRNA"/>
</dbReference>
<dbReference type="EMBL" id="BC128030">
    <property type="protein sequence ID" value="AAI28031.1"/>
    <property type="molecule type" value="mRNA"/>
</dbReference>
<dbReference type="CCDS" id="CCDS9557.1"/>
<dbReference type="RefSeq" id="NP_071755.1">
    <property type="nucleotide sequence ID" value="NM_022360.5"/>
</dbReference>
<dbReference type="SMR" id="P56851"/>
<dbReference type="BioGRID" id="122100">
    <property type="interactions" value="68"/>
</dbReference>
<dbReference type="FunCoup" id="P56851">
    <property type="interactions" value="29"/>
</dbReference>
<dbReference type="IntAct" id="P56851">
    <property type="interactions" value="57"/>
</dbReference>
<dbReference type="STRING" id="9606.ENSP00000314810"/>
<dbReference type="iPTMnet" id="P56851"/>
<dbReference type="PhosphoSitePlus" id="P56851"/>
<dbReference type="BioMuta" id="EDDM3B"/>
<dbReference type="DMDM" id="14916988"/>
<dbReference type="MassIVE" id="P56851"/>
<dbReference type="PaxDb" id="9606-ENSP00000314810"/>
<dbReference type="PeptideAtlas" id="P56851"/>
<dbReference type="ProteomicsDB" id="56952"/>
<dbReference type="Antibodypedia" id="24">
    <property type="antibodies" value="21 antibodies from 11 providers"/>
</dbReference>
<dbReference type="DNASU" id="64184"/>
<dbReference type="Ensembl" id="ENST00000326783.4">
    <property type="protein sequence ID" value="ENSP00000314810.3"/>
    <property type="gene ID" value="ENSG00000181552.4"/>
</dbReference>
<dbReference type="GeneID" id="64184"/>
<dbReference type="KEGG" id="hsa:64184"/>
<dbReference type="MANE-Select" id="ENST00000326783.4">
    <property type="protein sequence ID" value="ENSP00000314810.3"/>
    <property type="RefSeq nucleotide sequence ID" value="NM_022360.5"/>
    <property type="RefSeq protein sequence ID" value="NP_071755.1"/>
</dbReference>
<dbReference type="AGR" id="HGNC:19223"/>
<dbReference type="CTD" id="64184"/>
<dbReference type="DisGeNET" id="64184"/>
<dbReference type="GeneCards" id="EDDM3B"/>
<dbReference type="HGNC" id="HGNC:19223">
    <property type="gene designation" value="EDDM3B"/>
</dbReference>
<dbReference type="HPA" id="ENSG00000181552">
    <property type="expression patterns" value="Tissue enriched (epididymis)"/>
</dbReference>
<dbReference type="MIM" id="611582">
    <property type="type" value="gene"/>
</dbReference>
<dbReference type="neXtProt" id="NX_P56851"/>
<dbReference type="OpenTargets" id="ENSG00000181552"/>
<dbReference type="PharmGKB" id="PA165478900"/>
<dbReference type="VEuPathDB" id="HostDB:ENSG00000181552"/>
<dbReference type="eggNOG" id="ENOG502RWFV">
    <property type="taxonomic scope" value="Eukaryota"/>
</dbReference>
<dbReference type="GeneTree" id="ENSGT00390000004706"/>
<dbReference type="HOGENOM" id="CLU_148772_0_0_1"/>
<dbReference type="InParanoid" id="P56851"/>
<dbReference type="OMA" id="HKIEHIC"/>
<dbReference type="OrthoDB" id="9443769at2759"/>
<dbReference type="PAN-GO" id="P56851">
    <property type="GO annotations" value="0 GO annotations based on evolutionary models"/>
</dbReference>
<dbReference type="PhylomeDB" id="P56851"/>
<dbReference type="TreeFam" id="TF314795"/>
<dbReference type="PathwayCommons" id="P56851"/>
<dbReference type="SignaLink" id="P56851"/>
<dbReference type="BioGRID-ORCS" id="64184">
    <property type="hits" value="22 hits in 1145 CRISPR screens"/>
</dbReference>
<dbReference type="GenomeRNAi" id="64184"/>
<dbReference type="Pharos" id="P56851">
    <property type="development level" value="Tdark"/>
</dbReference>
<dbReference type="PRO" id="PR:P56851"/>
<dbReference type="Proteomes" id="UP000005640">
    <property type="component" value="Chromosome 14"/>
</dbReference>
<dbReference type="RNAct" id="P56851">
    <property type="molecule type" value="protein"/>
</dbReference>
<dbReference type="Bgee" id="ENSG00000181552">
    <property type="expression patterns" value="Expressed in corpus epididymis and 15 other cell types or tissues"/>
</dbReference>
<dbReference type="ExpressionAtlas" id="P56851">
    <property type="expression patterns" value="baseline and differential"/>
</dbReference>
<dbReference type="GO" id="GO:0005576">
    <property type="term" value="C:extracellular region"/>
    <property type="evidence" value="ECO:0007669"/>
    <property type="project" value="UniProtKB-SubCell"/>
</dbReference>
<dbReference type="Gene3D" id="3.10.130.10">
    <property type="entry name" value="Ribonuclease A-like domain"/>
    <property type="match status" value="1"/>
</dbReference>
<dbReference type="InterPro" id="IPR042402">
    <property type="entry name" value="EDDM3A/EDDM3B"/>
</dbReference>
<dbReference type="InterPro" id="IPR036816">
    <property type="entry name" value="RNaseA-like_dom_sf"/>
</dbReference>
<dbReference type="InterPro" id="IPR023412">
    <property type="entry name" value="RNaseA_domain"/>
</dbReference>
<dbReference type="PANTHER" id="PTHR16788">
    <property type="entry name" value="EPIDIDYMAL SECRETORY PROTEIN E3 ALPHA"/>
    <property type="match status" value="1"/>
</dbReference>
<dbReference type="PANTHER" id="PTHR16788:SF0">
    <property type="entry name" value="EPIDIDYMAL SECRETORY PROTEIN E3-BETA"/>
    <property type="match status" value="1"/>
</dbReference>
<dbReference type="Pfam" id="PF00074">
    <property type="entry name" value="RnaseA"/>
    <property type="match status" value="1"/>
</dbReference>
<dbReference type="SMART" id="SM00092">
    <property type="entry name" value="RNAse_Pc"/>
    <property type="match status" value="1"/>
</dbReference>
<dbReference type="SUPFAM" id="SSF54076">
    <property type="entry name" value="RNase A-like"/>
    <property type="match status" value="1"/>
</dbReference>
<proteinExistence type="evidence at protein level"/>
<gene>
    <name type="primary">EDDM3B</name>
    <name type="synonym">FAM12B</name>
    <name type="synonym">HE3B</name>
    <name type="ORF">UNQ6412/PRO21187</name>
</gene>
<reference key="1">
    <citation type="journal article" date="1994" name="Mol. Reprod. Dev.">
        <title>Major human epididymis-specific gene product, HE3, is the first representative of a novel gene family.</title>
        <authorList>
            <person name="Kirchhoff C."/>
            <person name="Pera I."/>
            <person name="Rust W."/>
            <person name="Ivell R."/>
        </authorList>
    </citation>
    <scope>NUCLEOTIDE SEQUENCE [MRNA]</scope>
    <source>
        <tissue>Epididymis</tissue>
    </source>
</reference>
<reference key="2">
    <citation type="submission" date="2000-11" db="EMBL/GenBank/DDBJ databases">
        <authorList>
            <person name="Kirchhoff C."/>
        </authorList>
    </citation>
    <scope>SEQUENCE REVISION</scope>
</reference>
<reference key="3">
    <citation type="journal article" date="2003" name="Genome Res.">
        <title>The secreted protein discovery initiative (SPDI), a large-scale effort to identify novel human secreted and transmembrane proteins: a bioinformatics assessment.</title>
        <authorList>
            <person name="Clark H.F."/>
            <person name="Gurney A.L."/>
            <person name="Abaya E."/>
            <person name="Baker K."/>
            <person name="Baldwin D.T."/>
            <person name="Brush J."/>
            <person name="Chen J."/>
            <person name="Chow B."/>
            <person name="Chui C."/>
            <person name="Crowley C."/>
            <person name="Currell B."/>
            <person name="Deuel B."/>
            <person name="Dowd P."/>
            <person name="Eaton D."/>
            <person name="Foster J.S."/>
            <person name="Grimaldi C."/>
            <person name="Gu Q."/>
            <person name="Hass P.E."/>
            <person name="Heldens S."/>
            <person name="Huang A."/>
            <person name="Kim H.S."/>
            <person name="Klimowski L."/>
            <person name="Jin Y."/>
            <person name="Johnson S."/>
            <person name="Lee J."/>
            <person name="Lewis L."/>
            <person name="Liao D."/>
            <person name="Mark M.R."/>
            <person name="Robbie E."/>
            <person name="Sanchez C."/>
            <person name="Schoenfeld J."/>
            <person name="Seshagiri S."/>
            <person name="Simmons L."/>
            <person name="Singh J."/>
            <person name="Smith V."/>
            <person name="Stinson J."/>
            <person name="Vagts A."/>
            <person name="Vandlen R.L."/>
            <person name="Watanabe C."/>
            <person name="Wieand D."/>
            <person name="Woods K."/>
            <person name="Xie M.-H."/>
            <person name="Yansura D.G."/>
            <person name="Yi S."/>
            <person name="Yu G."/>
            <person name="Yuan J."/>
            <person name="Zhang M."/>
            <person name="Zhang Z."/>
            <person name="Goddard A.D."/>
            <person name="Wood W.I."/>
            <person name="Godowski P.J."/>
            <person name="Gray A.M."/>
        </authorList>
    </citation>
    <scope>NUCLEOTIDE SEQUENCE [LARGE SCALE MRNA]</scope>
</reference>
<reference key="4">
    <citation type="journal article" date="2004" name="Genome Res.">
        <title>The status, quality, and expansion of the NIH full-length cDNA project: the Mammalian Gene Collection (MGC).</title>
        <authorList>
            <consortium name="The MGC Project Team"/>
        </authorList>
    </citation>
    <scope>NUCLEOTIDE SEQUENCE [LARGE SCALE MRNA]</scope>
    <scope>VARIANT VAL-5</scope>
</reference>
<accession>P56851</accession>
<accession>A0PK89</accession>
<comment type="function">
    <text>Possible function in sperm maturation.</text>
</comment>
<comment type="interaction">
    <interactant intactId="EBI-10215665">
        <id>P56851</id>
    </interactant>
    <interactant intactId="EBI-19125216">
        <id>Q86WK6</id>
        <label>AMIGO1</label>
    </interactant>
    <organismsDiffer>false</organismsDiffer>
    <experiments>3</experiments>
</comment>
<comment type="interaction">
    <interactant intactId="EBI-10215665">
        <id>P56851</id>
    </interactant>
    <interactant intactId="EBI-12222807">
        <id>P04233-2</id>
        <label>CD74</label>
    </interactant>
    <organismsDiffer>false</organismsDiffer>
    <experiments>3</experiments>
</comment>
<comment type="interaction">
    <interactant intactId="EBI-10215665">
        <id>P56851</id>
    </interactant>
    <interactant intactId="EBI-7797864">
        <id>P11912</id>
        <label>CD79A</label>
    </interactant>
    <organismsDiffer>false</organismsDiffer>
    <experiments>3</experiments>
</comment>
<comment type="interaction">
    <interactant intactId="EBI-10215665">
        <id>P56851</id>
    </interactant>
    <interactant intactId="EBI-740744">
        <id>O95471</id>
        <label>CLDN7</label>
    </interactant>
    <organismsDiffer>false</organismsDiffer>
    <experiments>3</experiments>
</comment>
<comment type="interaction">
    <interactant intactId="EBI-10215665">
        <id>P56851</id>
    </interactant>
    <interactant intactId="EBI-3904738">
        <id>P10176</id>
        <label>COX8A</label>
    </interactant>
    <organismsDiffer>false</organismsDiffer>
    <experiments>3</experiments>
</comment>
<comment type="interaction">
    <interactant intactId="EBI-10215665">
        <id>P56851</id>
    </interactant>
    <interactant intactId="EBI-2833872">
        <id>O15552</id>
        <label>FFAR2</label>
    </interactant>
    <organismsDiffer>false</organismsDiffer>
    <experiments>3</experiments>
</comment>
<comment type="interaction">
    <interactant intactId="EBI-10215665">
        <id>P56851</id>
    </interactant>
    <interactant intactId="EBI-12142257">
        <id>Q8TBE3</id>
        <label>FNDC9</label>
    </interactant>
    <organismsDiffer>false</organismsDiffer>
    <experiments>3</experiments>
</comment>
<comment type="interaction">
    <interactant intactId="EBI-10215665">
        <id>P56851</id>
    </interactant>
    <interactant intactId="EBI-13345167">
        <id>Q8TDT2</id>
        <label>GPR152</label>
    </interactant>
    <organismsDiffer>false</organismsDiffer>
    <experiments>3</experiments>
</comment>
<comment type="interaction">
    <interactant intactId="EBI-10215665">
        <id>P56851</id>
    </interactant>
    <interactant intactId="EBI-11721746">
        <id>Q8TED1</id>
        <label>GPX8</label>
    </interactant>
    <organismsDiffer>false</organismsDiffer>
    <experiments>3</experiments>
</comment>
<comment type="interaction">
    <interactant intactId="EBI-10215665">
        <id>P56851</id>
    </interactant>
    <interactant intactId="EBI-725421">
        <id>P32942</id>
        <label>ICAM3</label>
    </interactant>
    <organismsDiffer>false</organismsDiffer>
    <experiments>3</experiments>
</comment>
<comment type="interaction">
    <interactant intactId="EBI-10215665">
        <id>P56851</id>
    </interactant>
    <interactant intactId="EBI-465137">
        <id>Q9HDC5</id>
        <label>JPH1</label>
    </interactant>
    <organismsDiffer>false</organismsDiffer>
    <experiments>3</experiments>
</comment>
<comment type="interaction">
    <interactant intactId="EBI-10215665">
        <id>P56851</id>
    </interactant>
    <interactant intactId="EBI-12017638">
        <id>P48051</id>
        <label>KCNJ6</label>
    </interactant>
    <organismsDiffer>false</organismsDiffer>
    <experiments>3</experiments>
</comment>
<comment type="interaction">
    <interactant intactId="EBI-10215665">
        <id>P56851</id>
    </interactant>
    <interactant intactId="EBI-17272405">
        <id>Q8N743</id>
        <label>KIR3DL3</label>
    </interactant>
    <organismsDiffer>false</organismsDiffer>
    <experiments>3</experiments>
</comment>
<comment type="interaction">
    <interactant intactId="EBI-10215665">
        <id>P56851</id>
    </interactant>
    <interactant intactId="EBI-11304917">
        <id>Q8N386</id>
        <label>LRRC25</label>
    </interactant>
    <organismsDiffer>false</organismsDiffer>
    <experiments>3</experiments>
</comment>
<comment type="interaction">
    <interactant intactId="EBI-10215665">
        <id>P56851</id>
    </interactant>
    <interactant intactId="EBI-358888">
        <id>Q96AG4</id>
        <label>LRRC59</label>
    </interactant>
    <organismsDiffer>false</organismsDiffer>
    <experiments>3</experiments>
</comment>
<comment type="interaction">
    <interactant intactId="EBI-10215665">
        <id>P56851</id>
    </interactant>
    <interactant intactId="EBI-17263240">
        <id>P15941-11</id>
        <label>MUC1</label>
    </interactant>
    <organismsDiffer>false</organismsDiffer>
    <experiments>3</experiments>
</comment>
<comment type="interaction">
    <interactant intactId="EBI-10215665">
        <id>P56851</id>
    </interactant>
    <interactant intactId="EBI-3919694">
        <id>P15151</id>
        <label>PVR</label>
    </interactant>
    <organismsDiffer>false</organismsDiffer>
    <experiments>3</experiments>
</comment>
<comment type="interaction">
    <interactant intactId="EBI-10215665">
        <id>P56851</id>
    </interactant>
    <interactant intactId="EBI-18194029">
        <id>Q96L08</id>
        <label>SUSD3</label>
    </interactant>
    <organismsDiffer>false</organismsDiffer>
    <experiments>3</experiments>
</comment>
<comment type="interaction">
    <interactant intactId="EBI-10215665">
        <id>P56851</id>
    </interactant>
    <interactant intactId="EBI-7131783">
        <id>Q8N205</id>
        <label>SYNE4</label>
    </interactant>
    <organismsDiffer>false</organismsDiffer>
    <experiments>3</experiments>
</comment>
<comment type="interaction">
    <interactant intactId="EBI-10215665">
        <id>P56851</id>
    </interactant>
    <interactant intactId="EBI-2821497">
        <id>Q9BVX2</id>
        <label>TMEM106C</label>
    </interactant>
    <organismsDiffer>false</organismsDiffer>
    <experiments>3</experiments>
</comment>
<comment type="interaction">
    <interactant intactId="EBI-10215665">
        <id>P56851</id>
    </interactant>
    <interactant intactId="EBI-12345267">
        <id>O15393-2</id>
        <label>TMPRSS2</label>
    </interactant>
    <organismsDiffer>false</organismsDiffer>
    <experiments>3</experiments>
</comment>
<comment type="subcellular location">
    <subcellularLocation>
        <location evidence="3">Secreted</location>
    </subcellularLocation>
</comment>
<comment type="tissue specificity">
    <text>Epididymis.</text>
</comment>
<organism>
    <name type="scientific">Homo sapiens</name>
    <name type="common">Human</name>
    <dbReference type="NCBI Taxonomy" id="9606"/>
    <lineage>
        <taxon>Eukaryota</taxon>
        <taxon>Metazoa</taxon>
        <taxon>Chordata</taxon>
        <taxon>Craniata</taxon>
        <taxon>Vertebrata</taxon>
        <taxon>Euteleostomi</taxon>
        <taxon>Mammalia</taxon>
        <taxon>Eutheria</taxon>
        <taxon>Euarchontoglires</taxon>
        <taxon>Primates</taxon>
        <taxon>Haplorrhini</taxon>
        <taxon>Catarrhini</taxon>
        <taxon>Hominidae</taxon>
        <taxon>Homo</taxon>
    </lineage>
</organism>
<protein>
    <recommendedName>
        <fullName>Epididymal secretory protein E3-beta</fullName>
    </recommendedName>
    <alternativeName>
        <fullName>Human epididymis-specific protein 3-beta</fullName>
        <shortName>HE3-beta</shortName>
    </alternativeName>
</protein>
<evidence type="ECO:0000255" key="1"/>
<evidence type="ECO:0000269" key="2">
    <source>
    </source>
</evidence>
<evidence type="ECO:0000305" key="3"/>